<protein>
    <recommendedName>
        <fullName>Magnesium-chelatase subunit ChlH, chloroplastic</fullName>
        <shortName>Mg-chelatase subunit H</shortName>
        <ecNumber>6.6.1.1</ecNumber>
    </recommendedName>
    <alternativeName>
        <fullName>Mg-protoporphyrin IX chelatase subunit ChlH</fullName>
    </alternativeName>
</protein>
<accession>Q10M50</accession>
<accession>Q0DSA2</accession>
<organism>
    <name type="scientific">Oryza sativa subsp. japonica</name>
    <name type="common">Rice</name>
    <dbReference type="NCBI Taxonomy" id="39947"/>
    <lineage>
        <taxon>Eukaryota</taxon>
        <taxon>Viridiplantae</taxon>
        <taxon>Streptophyta</taxon>
        <taxon>Embryophyta</taxon>
        <taxon>Tracheophyta</taxon>
        <taxon>Spermatophyta</taxon>
        <taxon>Magnoliopsida</taxon>
        <taxon>Liliopsida</taxon>
        <taxon>Poales</taxon>
        <taxon>Poaceae</taxon>
        <taxon>BOP clade</taxon>
        <taxon>Oryzoideae</taxon>
        <taxon>Oryzeae</taxon>
        <taxon>Oryzinae</taxon>
        <taxon>Oryza</taxon>
        <taxon>Oryza sativa</taxon>
    </lineage>
</organism>
<dbReference type="EC" id="6.6.1.1"/>
<dbReference type="EMBL" id="DP000009">
    <property type="protein sequence ID" value="ABF95686.1"/>
    <property type="molecule type" value="Genomic_DNA"/>
</dbReference>
<dbReference type="EMBL" id="DP000009">
    <property type="protein sequence ID" value="ABF95687.1"/>
    <property type="molecule type" value="Genomic_DNA"/>
</dbReference>
<dbReference type="EMBL" id="AP008209">
    <property type="protein sequence ID" value="BAF11886.2"/>
    <property type="status" value="ALT_INIT"/>
    <property type="molecule type" value="Genomic_DNA"/>
</dbReference>
<dbReference type="EMBL" id="AP014959">
    <property type="status" value="NOT_ANNOTATED_CDS"/>
    <property type="molecule type" value="Genomic_DNA"/>
</dbReference>
<dbReference type="RefSeq" id="XP_015631165.1">
    <property type="nucleotide sequence ID" value="XM_015775679.1"/>
</dbReference>
<dbReference type="RefSeq" id="XP_015631166.1">
    <property type="nucleotide sequence ID" value="XM_015775680.1"/>
</dbReference>
<dbReference type="SMR" id="Q10M50"/>
<dbReference type="FunCoup" id="Q10M50">
    <property type="interactions" value="638"/>
</dbReference>
<dbReference type="STRING" id="39947.Q10M50"/>
<dbReference type="PaxDb" id="39947-Q10M50"/>
<dbReference type="EnsemblPlants" id="Os03t0323200-04">
    <property type="protein sequence ID" value="Os03t0323200-04"/>
    <property type="gene ID" value="Os03g0323200"/>
</dbReference>
<dbReference type="Gramene" id="Os03t0323200-04">
    <property type="protein sequence ID" value="Os03t0323200-04"/>
    <property type="gene ID" value="Os03g0323200"/>
</dbReference>
<dbReference type="KEGG" id="dosa:Os03g0323200"/>
<dbReference type="eggNOG" id="ENOG502QT3B">
    <property type="taxonomic scope" value="Eukaryota"/>
</dbReference>
<dbReference type="HOGENOM" id="CLU_002017_1_1_1"/>
<dbReference type="InParanoid" id="Q10M50"/>
<dbReference type="OrthoDB" id="10252009at2759"/>
<dbReference type="UniPathway" id="UPA00668"/>
<dbReference type="Proteomes" id="UP000000763">
    <property type="component" value="Chromosome 3"/>
</dbReference>
<dbReference type="Proteomes" id="UP000059680">
    <property type="component" value="Chromosome 3"/>
</dbReference>
<dbReference type="GO" id="GO:0009507">
    <property type="term" value="C:chloroplast"/>
    <property type="evidence" value="ECO:0000318"/>
    <property type="project" value="GO_Central"/>
</dbReference>
<dbReference type="GO" id="GO:0031969">
    <property type="term" value="C:chloroplast membrane"/>
    <property type="evidence" value="ECO:0007669"/>
    <property type="project" value="UniProtKB-SubCell"/>
</dbReference>
<dbReference type="GO" id="GO:0009570">
    <property type="term" value="C:chloroplast stroma"/>
    <property type="evidence" value="ECO:0007669"/>
    <property type="project" value="UniProtKB-SubCell"/>
</dbReference>
<dbReference type="GO" id="GO:0005524">
    <property type="term" value="F:ATP binding"/>
    <property type="evidence" value="ECO:0007669"/>
    <property type="project" value="UniProtKB-KW"/>
</dbReference>
<dbReference type="GO" id="GO:0016851">
    <property type="term" value="F:magnesium chelatase activity"/>
    <property type="evidence" value="ECO:0007669"/>
    <property type="project" value="UniProtKB-EC"/>
</dbReference>
<dbReference type="GO" id="GO:0015995">
    <property type="term" value="P:chlorophyll biosynthetic process"/>
    <property type="evidence" value="ECO:0007669"/>
    <property type="project" value="UniProtKB-UniPathway"/>
</dbReference>
<dbReference type="GO" id="GO:0015979">
    <property type="term" value="P:photosynthesis"/>
    <property type="evidence" value="ECO:0007669"/>
    <property type="project" value="UniProtKB-KW"/>
</dbReference>
<dbReference type="CDD" id="cd10150">
    <property type="entry name" value="CobN_like"/>
    <property type="match status" value="1"/>
</dbReference>
<dbReference type="InterPro" id="IPR011771">
    <property type="entry name" value="BchH"/>
</dbReference>
<dbReference type="InterPro" id="IPR003672">
    <property type="entry name" value="CobN/Mg_chltase"/>
</dbReference>
<dbReference type="InterPro" id="IPR022571">
    <property type="entry name" value="Mg_chelatase_H_N"/>
</dbReference>
<dbReference type="NCBIfam" id="TIGR02025">
    <property type="entry name" value="BchH"/>
    <property type="match status" value="1"/>
</dbReference>
<dbReference type="NCBIfam" id="NF009140">
    <property type="entry name" value="PRK12493.1"/>
    <property type="match status" value="1"/>
</dbReference>
<dbReference type="PANTHER" id="PTHR44119">
    <property type="entry name" value="MAGNESIUM-CHELATASE SUBUNIT CHLH, CHLOROPLASTIC"/>
    <property type="match status" value="1"/>
</dbReference>
<dbReference type="PANTHER" id="PTHR44119:SF1">
    <property type="entry name" value="MAGNESIUM-CHELATASE SUBUNIT CHLH, CHLOROPLASTIC"/>
    <property type="match status" value="1"/>
</dbReference>
<dbReference type="Pfam" id="PF02514">
    <property type="entry name" value="CobN-Mg_chel"/>
    <property type="match status" value="1"/>
</dbReference>
<dbReference type="Pfam" id="PF11965">
    <property type="entry name" value="DUF3479"/>
    <property type="match status" value="1"/>
</dbReference>
<evidence type="ECO:0000250" key="1"/>
<evidence type="ECO:0000255" key="2"/>
<evidence type="ECO:0000269" key="3">
    <source>
    </source>
</evidence>
<evidence type="ECO:0000305" key="4"/>
<feature type="transit peptide" description="Chloroplast" evidence="2">
    <location>
        <begin position="1"/>
        <end position="50"/>
    </location>
</feature>
<feature type="chain" id="PRO_0000418766" description="Magnesium-chelatase subunit ChlH, chloroplastic">
    <location>
        <begin position="51"/>
        <end position="1387"/>
    </location>
</feature>
<comment type="function">
    <text evidence="3">Involved in chlorophyll biosynthesis. Catalyzes the insertion of magnesium ion into protoporphyrin IX to yield Mg-protoporphyrin IX. The reaction takes place in two steps, with an ATP-dependent activation followed by an ATP-dependent chelation step. May be involved in the plastid-to-nucleus retrograde signaling.</text>
</comment>
<comment type="catalytic activity">
    <reaction>
        <text>protoporphyrin IX + Mg(2+) + ATP + H2O = Mg-protoporphyrin IX + ADP + phosphate + 3 H(+)</text>
        <dbReference type="Rhea" id="RHEA:13961"/>
        <dbReference type="ChEBI" id="CHEBI:15377"/>
        <dbReference type="ChEBI" id="CHEBI:15378"/>
        <dbReference type="ChEBI" id="CHEBI:18420"/>
        <dbReference type="ChEBI" id="CHEBI:30616"/>
        <dbReference type="ChEBI" id="CHEBI:43474"/>
        <dbReference type="ChEBI" id="CHEBI:57306"/>
        <dbReference type="ChEBI" id="CHEBI:60492"/>
        <dbReference type="ChEBI" id="CHEBI:456216"/>
        <dbReference type="EC" id="6.6.1.1"/>
    </reaction>
</comment>
<comment type="pathway">
    <text>Porphyrin-containing compound metabolism; chlorophyll biosynthesis.</text>
</comment>
<comment type="subunit">
    <text evidence="3">The magnesium chelatase complex is a heterotrimer consisting of subunits CHLI, CHLD and CHLH.</text>
</comment>
<comment type="subcellular location">
    <subcellularLocation>
        <location evidence="1">Plastid</location>
        <location evidence="1">Chloroplast stroma</location>
    </subcellularLocation>
    <subcellularLocation>
        <location evidence="1">Plastid</location>
        <location evidence="1">Chloroplast membrane</location>
        <topology evidence="1">Peripheral membrane protein</topology>
        <orientation evidence="1">Stromal side</orientation>
    </subcellularLocation>
    <subcellularLocation>
        <location evidence="1">Plastid</location>
        <location evidence="1">Chloroplast membrane</location>
        <topology evidence="1">Peripheral membrane protein</topology>
        <orientation evidence="1">Cytoplasmic side</orientation>
    </subcellularLocation>
    <text evidence="1">Predominantly associated with the chloroplast envelope. Spans the chloroplast envelope and its N- and C-termini are exposed to the cytosol (By similarity).</text>
</comment>
<comment type="similarity">
    <text evidence="4">Belongs to the Mg-chelatase subunit H family.</text>
</comment>
<comment type="sequence caution" evidence="4">
    <conflict type="erroneous initiation">
        <sequence resource="EMBL-CDS" id="BAF11886"/>
    </conflict>
    <text>Truncated N-terminus.</text>
</comment>
<reference key="1">
    <citation type="journal article" date="2005" name="Genome Res.">
        <title>Sequence, annotation, and analysis of synteny between rice chromosome 3 and diverged grass species.</title>
        <authorList>
            <consortium name="The rice chromosome 3 sequencing consortium"/>
            <person name="Buell C.R."/>
            <person name="Yuan Q."/>
            <person name="Ouyang S."/>
            <person name="Liu J."/>
            <person name="Zhu W."/>
            <person name="Wang A."/>
            <person name="Maiti R."/>
            <person name="Haas B."/>
            <person name="Wortman J."/>
            <person name="Pertea M."/>
            <person name="Jones K.M."/>
            <person name="Kim M."/>
            <person name="Overton L."/>
            <person name="Tsitrin T."/>
            <person name="Fadrosh D."/>
            <person name="Bera J."/>
            <person name="Weaver B."/>
            <person name="Jin S."/>
            <person name="Johri S."/>
            <person name="Reardon M."/>
            <person name="Webb K."/>
            <person name="Hill J."/>
            <person name="Moffat K."/>
            <person name="Tallon L."/>
            <person name="Van Aken S."/>
            <person name="Lewis M."/>
            <person name="Utterback T."/>
            <person name="Feldblyum T."/>
            <person name="Zismann V."/>
            <person name="Iobst S."/>
            <person name="Hsiao J."/>
            <person name="de Vazeille A.R."/>
            <person name="Salzberg S.L."/>
            <person name="White O."/>
            <person name="Fraser C.M."/>
            <person name="Yu Y."/>
            <person name="Kim H."/>
            <person name="Rambo T."/>
            <person name="Currie J."/>
            <person name="Collura K."/>
            <person name="Kernodle-Thompson S."/>
            <person name="Wei F."/>
            <person name="Kudrna K."/>
            <person name="Ammiraju J.S.S."/>
            <person name="Luo M."/>
            <person name="Goicoechea J.L."/>
            <person name="Wing R.A."/>
            <person name="Henry D."/>
            <person name="Oates R."/>
            <person name="Palmer M."/>
            <person name="Pries G."/>
            <person name="Saski C."/>
            <person name="Simmons J."/>
            <person name="Soderlund C."/>
            <person name="Nelson W."/>
            <person name="de la Bastide M."/>
            <person name="Spiegel L."/>
            <person name="Nascimento L."/>
            <person name="Huang E."/>
            <person name="Preston R."/>
            <person name="Zutavern T."/>
            <person name="Palmer L."/>
            <person name="O'Shaughnessy A."/>
            <person name="Dike S."/>
            <person name="McCombie W.R."/>
            <person name="Minx P."/>
            <person name="Cordum H."/>
            <person name="Wilson R."/>
            <person name="Jin W."/>
            <person name="Lee H.R."/>
            <person name="Jiang J."/>
            <person name="Jackson S."/>
        </authorList>
    </citation>
    <scope>NUCLEOTIDE SEQUENCE [LARGE SCALE GENOMIC DNA]</scope>
    <source>
        <strain>cv. Nipponbare</strain>
    </source>
</reference>
<reference key="2">
    <citation type="journal article" date="2005" name="Nature">
        <title>The map-based sequence of the rice genome.</title>
        <authorList>
            <consortium name="International rice genome sequencing project (IRGSP)"/>
        </authorList>
    </citation>
    <scope>NUCLEOTIDE SEQUENCE [LARGE SCALE GENOMIC DNA]</scope>
    <source>
        <strain>cv. Nipponbare</strain>
    </source>
</reference>
<reference key="3">
    <citation type="journal article" date="2008" name="Nucleic Acids Res.">
        <title>The rice annotation project database (RAP-DB): 2008 update.</title>
        <authorList>
            <consortium name="The rice annotation project (RAP)"/>
        </authorList>
    </citation>
    <scope>GENOME REANNOTATION</scope>
    <source>
        <strain>cv. Nipponbare</strain>
    </source>
</reference>
<reference key="4">
    <citation type="journal article" date="2013" name="Rice">
        <title>Improvement of the Oryza sativa Nipponbare reference genome using next generation sequence and optical map data.</title>
        <authorList>
            <person name="Kawahara Y."/>
            <person name="de la Bastide M."/>
            <person name="Hamilton J.P."/>
            <person name="Kanamori H."/>
            <person name="McCombie W.R."/>
            <person name="Ouyang S."/>
            <person name="Schwartz D.C."/>
            <person name="Tanaka T."/>
            <person name="Wu J."/>
            <person name="Zhou S."/>
            <person name="Childs K.L."/>
            <person name="Davidson R.M."/>
            <person name="Lin H."/>
            <person name="Quesada-Ocampo L."/>
            <person name="Vaillancourt B."/>
            <person name="Sakai H."/>
            <person name="Lee S.S."/>
            <person name="Kim J."/>
            <person name="Numa H."/>
            <person name="Itoh T."/>
            <person name="Buell C.R."/>
            <person name="Matsumoto T."/>
        </authorList>
    </citation>
    <scope>GENOME REANNOTATION</scope>
    <source>
        <strain>cv. Nipponbare</strain>
    </source>
</reference>
<reference key="5">
    <citation type="journal article" date="2012" name="FEBS Lett.">
        <title>C-terminal residues of oryza sativa GUN4 are required for the activation of the ChlH subunit of magnesium chelatase in chlorophyll synthesis.</title>
        <authorList>
            <person name="Zhou S."/>
            <person name="Sawicki A."/>
            <person name="Willows R.D."/>
            <person name="Luo M."/>
        </authorList>
    </citation>
    <scope>FUNCTION</scope>
    <scope>SUBUNIT</scope>
</reference>
<name>CHLH_ORYSJ</name>
<keyword id="KW-0067">ATP-binding</keyword>
<keyword id="KW-0149">Chlorophyll biosynthesis</keyword>
<keyword id="KW-0150">Chloroplast</keyword>
<keyword id="KW-0436">Ligase</keyword>
<keyword id="KW-0472">Membrane</keyword>
<keyword id="KW-0547">Nucleotide-binding</keyword>
<keyword id="KW-0602">Photosynthesis</keyword>
<keyword id="KW-0934">Plastid</keyword>
<keyword id="KW-1185">Reference proteome</keyword>
<keyword id="KW-0809">Transit peptide</keyword>
<gene>
    <name type="primary">CHLH</name>
    <name type="ordered locus">Os03g0323200</name>
    <name type="ordered locus">LOC_Os03g20700</name>
</gene>
<proteinExistence type="evidence at protein level"/>
<sequence>MSSLVSTPFTTATGVQKKLGAPVPLHSFLLSRRQPAAGAGRGRAAAAAIRCAVAGNGLFTQTKPEVRRVVPPEGDASRRGVPRVKVVYVVLEAQYQSSVTAAVRELNADPRRAAGFEVVGYLVEELRDEETYKTFCADLADANVFIGSLIFVEELALKVKDAVEKERDRMDAVLVFPSMPEVMRLNKLGSFSMSQLGQSKSPFFQLFKRKKNSGGFADSMLKLVRTLPKVLKYLPSDKAQDARLYILSLQFWLGGSPDNLQNFLKMIAVSYVPALKGADIKYDDPVLFLDAGIWHPLAPTMYDDVKEYLNWYGTRRDTNDKLKDPNAPVIGLVLQRSHIVTGDDGHYVAVIMELEAKGAKVIPIFAGGLDFSGPTQRYLVDPITGKPFVNAVVSLTGFALVGGPARQDHPKAIAALQKLDVPYIVALPLVFQTTEEWLNSTLGLHPIQVALQVALPELDGGMEPIVFAGRDPRTGKSHALHKRVEQLCTRAIRWAELKRKTKEEKKLAITVFSFPPDKGNVGTAAYLNVFNSIYSVLQDLKKDGYNVEGLPDTAEALIEEVIHDKEAQFNSPNLNVAYRMNVREYQSLTSYASLLEENWGKPPGNLNSDGENLLVYGKQYGNVFIGVQPTFGYEGDPMRLLFSKSASPHHGFAAYYTFVEKIFQADAVLHFGTHGSLEFMPGKQVGMSDACYPDSLIGNIPNIYYYAANNPSEATVAKRRSYANTISYLTPPAENAGLYKGLKQLSELISSYQSLKDTGRGPQIVSSIISTAKQCNLDKDVPLPEEGVELPPNERDLIVGKVYAKIMEIESRLLPCGLHVIGEPPSAIEAVATLVNIASLDRPEDEIYSLPNILAQTVGRNIEDVYRGSDKGILADVELLRQITEASRGAITTFVERTTNNKGQVVDVTNKLSTMLGFGLSEPWVQHLSKTKFIRADREKLRTLFTFLGECLKLIVADNELGSLKLALEGSYVEPGPGGDPIRNPKVLPTGKNIHALDPQAIPTTAALKSAKIIVDRLLERQKVDNGGKYPETIALVLWGTDNIKTYGESLAQVLWMIGVRPVADTFGRVNRVEPVSLEELGRPRIDVVINCSGVFRDLFINQMNLLDRAVKMVAELDEPEEMNYVRKHAQEQARELGVSLREAATRVFSNASGSYSSNVNLAVENASWTDEKQLQDMYLSRKSFAFDCDAPGAGMREQRKTFELALATADATFQNLDSSEISLTDVSHYFDSDPTKLVQGLRKDGRAPSSYIADTTTANAQVRTLSETVRLDARTKLLNPKWYEGMMKSGYEGVREIEKRLTNTVGWSATSGQVDNWVYEEANATFIEDEAMRKRLMDTNPNSFRKLVQTFLEASGRGYWETSEENLEKLRELYSEVEDKIEGIDR</sequence>